<feature type="initiator methionine" description="Removed" evidence="1">
    <location>
        <position position="1"/>
    </location>
</feature>
<feature type="chain" id="PRO_0000180318" description="3-oxoacyl-[acyl-carrier-protein] synthase 2">
    <location>
        <begin position="2"/>
        <end position="413"/>
    </location>
</feature>
<feature type="domain" description="Ketosynthase family 3 (KS3)" evidence="3">
    <location>
        <begin position="3"/>
        <end position="412"/>
    </location>
</feature>
<feature type="active site" description="For beta-ketoacyl synthase activity" evidence="3">
    <location>
        <position position="164"/>
    </location>
</feature>
<feature type="active site" description="For beta-ketoacyl synthase activity" evidence="3">
    <location>
        <position position="304"/>
    </location>
</feature>
<feature type="active site" description="For beta-ketoacyl synthase activity" evidence="3">
    <location>
        <position position="341"/>
    </location>
</feature>
<comment type="function">
    <text evidence="2">Involved in the type II fatty acid elongation cycle. Catalyzes the elongation of a wide range of acyl-ACP by the addition of two carbons from malonyl-ACP to an acyl acceptor. Can efficiently catalyze the conversion of palmitoleoyl-ACP (cis-hexadec-9-enoyl-ACP) to cis-vaccenoyl-ACP (cis-octadec-11-enoyl-ACP), an essential step in the thermal regulation of fatty acid composition.</text>
</comment>
<comment type="catalytic activity">
    <reaction evidence="2">
        <text>a fatty acyl-[ACP] + malonyl-[ACP] + H(+) = a 3-oxoacyl-[ACP] + holo-[ACP] + CO2</text>
        <dbReference type="Rhea" id="RHEA:22836"/>
        <dbReference type="Rhea" id="RHEA-COMP:9623"/>
        <dbReference type="Rhea" id="RHEA-COMP:9685"/>
        <dbReference type="Rhea" id="RHEA-COMP:9916"/>
        <dbReference type="Rhea" id="RHEA-COMP:14125"/>
        <dbReference type="ChEBI" id="CHEBI:15378"/>
        <dbReference type="ChEBI" id="CHEBI:16526"/>
        <dbReference type="ChEBI" id="CHEBI:64479"/>
        <dbReference type="ChEBI" id="CHEBI:78449"/>
        <dbReference type="ChEBI" id="CHEBI:78776"/>
        <dbReference type="ChEBI" id="CHEBI:138651"/>
    </reaction>
</comment>
<comment type="catalytic activity">
    <reaction evidence="2">
        <text>(9Z)-hexadecenoyl-[ACP] + malonyl-[ACP] + H(+) = 3-oxo-(11Z)-octadecenoyl-[ACP] + holo-[ACP] + CO2</text>
        <dbReference type="Rhea" id="RHEA:55040"/>
        <dbReference type="Rhea" id="RHEA-COMP:9623"/>
        <dbReference type="Rhea" id="RHEA-COMP:9685"/>
        <dbReference type="Rhea" id="RHEA-COMP:10800"/>
        <dbReference type="Rhea" id="RHEA-COMP:14074"/>
        <dbReference type="ChEBI" id="CHEBI:15378"/>
        <dbReference type="ChEBI" id="CHEBI:16526"/>
        <dbReference type="ChEBI" id="CHEBI:64479"/>
        <dbReference type="ChEBI" id="CHEBI:78449"/>
        <dbReference type="ChEBI" id="CHEBI:83989"/>
        <dbReference type="ChEBI" id="CHEBI:138538"/>
        <dbReference type="EC" id="2.3.1.179"/>
    </reaction>
</comment>
<comment type="pathway">
    <text evidence="2">Lipid metabolism; fatty acid biosynthesis.</text>
</comment>
<comment type="subunit">
    <text evidence="2">Homodimer.</text>
</comment>
<comment type="similarity">
    <text evidence="4">Belongs to the thiolase-like superfamily. Beta-ketoacyl-ACP synthases family.</text>
</comment>
<dbReference type="EC" id="2.3.1.179" evidence="2"/>
<dbReference type="EMBL" id="AE005674">
    <property type="protein sequence ID" value="AAN42718.1"/>
    <property type="molecule type" value="Genomic_DNA"/>
</dbReference>
<dbReference type="EMBL" id="AE014073">
    <property type="protein sequence ID" value="AAP16606.1"/>
    <property type="molecule type" value="Genomic_DNA"/>
</dbReference>
<dbReference type="RefSeq" id="NP_707011.1">
    <property type="nucleotide sequence ID" value="NC_004337.2"/>
</dbReference>
<dbReference type="RefSeq" id="WP_000044679.1">
    <property type="nucleotide sequence ID" value="NZ_WPGW01000001.1"/>
</dbReference>
<dbReference type="SMR" id="P0AAI8"/>
<dbReference type="STRING" id="198214.SF1099"/>
<dbReference type="PaxDb" id="198214-SF1099"/>
<dbReference type="GeneID" id="1024036"/>
<dbReference type="GeneID" id="86945966"/>
<dbReference type="KEGG" id="sfl:SF1099"/>
<dbReference type="KEGG" id="sfx:S1179"/>
<dbReference type="PATRIC" id="fig|198214.7.peg.1287"/>
<dbReference type="HOGENOM" id="CLU_000022_69_2_6"/>
<dbReference type="UniPathway" id="UPA00094"/>
<dbReference type="Proteomes" id="UP000001006">
    <property type="component" value="Chromosome"/>
</dbReference>
<dbReference type="Proteomes" id="UP000002673">
    <property type="component" value="Chromosome"/>
</dbReference>
<dbReference type="GO" id="GO:0005829">
    <property type="term" value="C:cytosol"/>
    <property type="evidence" value="ECO:0007669"/>
    <property type="project" value="TreeGrafter"/>
</dbReference>
<dbReference type="GO" id="GO:0004315">
    <property type="term" value="F:3-oxoacyl-[acyl-carrier-protein] synthase activity"/>
    <property type="evidence" value="ECO:0007669"/>
    <property type="project" value="UniProtKB-EC"/>
</dbReference>
<dbReference type="GO" id="GO:0006633">
    <property type="term" value="P:fatty acid biosynthetic process"/>
    <property type="evidence" value="ECO:0007669"/>
    <property type="project" value="UniProtKB-UniPathway"/>
</dbReference>
<dbReference type="CDD" id="cd00834">
    <property type="entry name" value="KAS_I_II"/>
    <property type="match status" value="1"/>
</dbReference>
<dbReference type="FunFam" id="3.40.47.10:FF:000009">
    <property type="entry name" value="3-oxoacyl-[acyl-carrier-protein] synthase 2"/>
    <property type="match status" value="1"/>
</dbReference>
<dbReference type="Gene3D" id="3.40.47.10">
    <property type="match status" value="1"/>
</dbReference>
<dbReference type="InterPro" id="IPR017568">
    <property type="entry name" value="3-oxoacyl-ACP_synth-2"/>
</dbReference>
<dbReference type="InterPro" id="IPR000794">
    <property type="entry name" value="Beta-ketoacyl_synthase"/>
</dbReference>
<dbReference type="InterPro" id="IPR018201">
    <property type="entry name" value="Ketoacyl_synth_AS"/>
</dbReference>
<dbReference type="InterPro" id="IPR014031">
    <property type="entry name" value="Ketoacyl_synth_C"/>
</dbReference>
<dbReference type="InterPro" id="IPR014030">
    <property type="entry name" value="Ketoacyl_synth_N"/>
</dbReference>
<dbReference type="InterPro" id="IPR020841">
    <property type="entry name" value="PKS_Beta-ketoAc_synthase_dom"/>
</dbReference>
<dbReference type="InterPro" id="IPR016039">
    <property type="entry name" value="Thiolase-like"/>
</dbReference>
<dbReference type="NCBIfam" id="TIGR03150">
    <property type="entry name" value="fabF"/>
    <property type="match status" value="1"/>
</dbReference>
<dbReference type="NCBIfam" id="NF004970">
    <property type="entry name" value="PRK06333.1"/>
    <property type="match status" value="1"/>
</dbReference>
<dbReference type="NCBIfam" id="NF005589">
    <property type="entry name" value="PRK07314.1"/>
    <property type="match status" value="1"/>
</dbReference>
<dbReference type="NCBIfam" id="NF006434">
    <property type="entry name" value="PRK08722.1"/>
    <property type="match status" value="1"/>
</dbReference>
<dbReference type="PANTHER" id="PTHR11712:SF336">
    <property type="entry name" value="3-OXOACYL-[ACYL-CARRIER-PROTEIN] SYNTHASE, MITOCHONDRIAL"/>
    <property type="match status" value="1"/>
</dbReference>
<dbReference type="PANTHER" id="PTHR11712">
    <property type="entry name" value="POLYKETIDE SYNTHASE-RELATED"/>
    <property type="match status" value="1"/>
</dbReference>
<dbReference type="Pfam" id="PF00109">
    <property type="entry name" value="ketoacyl-synt"/>
    <property type="match status" value="1"/>
</dbReference>
<dbReference type="Pfam" id="PF02801">
    <property type="entry name" value="Ketoacyl-synt_C"/>
    <property type="match status" value="1"/>
</dbReference>
<dbReference type="PIRSF" id="PIRSF000447">
    <property type="entry name" value="KAS_II"/>
    <property type="match status" value="1"/>
</dbReference>
<dbReference type="SMART" id="SM00825">
    <property type="entry name" value="PKS_KS"/>
    <property type="match status" value="1"/>
</dbReference>
<dbReference type="SUPFAM" id="SSF53901">
    <property type="entry name" value="Thiolase-like"/>
    <property type="match status" value="2"/>
</dbReference>
<dbReference type="PROSITE" id="PS00606">
    <property type="entry name" value="KS3_1"/>
    <property type="match status" value="1"/>
</dbReference>
<dbReference type="PROSITE" id="PS52004">
    <property type="entry name" value="KS3_2"/>
    <property type="match status" value="1"/>
</dbReference>
<reference key="1">
    <citation type="journal article" date="2002" name="Nucleic Acids Res.">
        <title>Genome sequence of Shigella flexneri 2a: insights into pathogenicity through comparison with genomes of Escherichia coli K12 and O157.</title>
        <authorList>
            <person name="Jin Q."/>
            <person name="Yuan Z."/>
            <person name="Xu J."/>
            <person name="Wang Y."/>
            <person name="Shen Y."/>
            <person name="Lu W."/>
            <person name="Wang J."/>
            <person name="Liu H."/>
            <person name="Yang J."/>
            <person name="Yang F."/>
            <person name="Zhang X."/>
            <person name="Zhang J."/>
            <person name="Yang G."/>
            <person name="Wu H."/>
            <person name="Qu D."/>
            <person name="Dong J."/>
            <person name="Sun L."/>
            <person name="Xue Y."/>
            <person name="Zhao A."/>
            <person name="Gao Y."/>
            <person name="Zhu J."/>
            <person name="Kan B."/>
            <person name="Ding K."/>
            <person name="Chen S."/>
            <person name="Cheng H."/>
            <person name="Yao Z."/>
            <person name="He B."/>
            <person name="Chen R."/>
            <person name="Ma D."/>
            <person name="Qiang B."/>
            <person name="Wen Y."/>
            <person name="Hou Y."/>
            <person name="Yu J."/>
        </authorList>
    </citation>
    <scope>NUCLEOTIDE SEQUENCE [LARGE SCALE GENOMIC DNA]</scope>
    <source>
        <strain>301 / Serotype 2a</strain>
    </source>
</reference>
<reference key="2">
    <citation type="journal article" date="2003" name="Infect. Immun.">
        <title>Complete genome sequence and comparative genomics of Shigella flexneri serotype 2a strain 2457T.</title>
        <authorList>
            <person name="Wei J."/>
            <person name="Goldberg M.B."/>
            <person name="Burland V."/>
            <person name="Venkatesan M.M."/>
            <person name="Deng W."/>
            <person name="Fournier G."/>
            <person name="Mayhew G.F."/>
            <person name="Plunkett G. III"/>
            <person name="Rose D.J."/>
            <person name="Darling A."/>
            <person name="Mau B."/>
            <person name="Perna N.T."/>
            <person name="Payne S.M."/>
            <person name="Runyen-Janecky L.J."/>
            <person name="Zhou S."/>
            <person name="Schwartz D.C."/>
            <person name="Blattner F.R."/>
        </authorList>
    </citation>
    <scope>NUCLEOTIDE SEQUENCE [LARGE SCALE GENOMIC DNA]</scope>
    <source>
        <strain>ATCC 700930 / 2457T / Serotype 2a</strain>
    </source>
</reference>
<keyword id="KW-0012">Acyltransferase</keyword>
<keyword id="KW-0275">Fatty acid biosynthesis</keyword>
<keyword id="KW-0276">Fatty acid metabolism</keyword>
<keyword id="KW-0444">Lipid biosynthesis</keyword>
<keyword id="KW-0443">Lipid metabolism</keyword>
<keyword id="KW-1185">Reference proteome</keyword>
<keyword id="KW-0808">Transferase</keyword>
<protein>
    <recommendedName>
        <fullName>3-oxoacyl-[acyl-carrier-protein] synthase 2</fullName>
        <ecNumber evidence="2">2.3.1.179</ecNumber>
    </recommendedName>
    <alternativeName>
        <fullName>3-oxoacyl-[acyl-carrier-protein] synthase II</fullName>
    </alternativeName>
    <alternativeName>
        <fullName>Beta-ketoacyl-ACP synthase II</fullName>
        <shortName>KAS II</shortName>
    </alternativeName>
</protein>
<organism>
    <name type="scientific">Shigella flexneri</name>
    <dbReference type="NCBI Taxonomy" id="623"/>
    <lineage>
        <taxon>Bacteria</taxon>
        <taxon>Pseudomonadati</taxon>
        <taxon>Pseudomonadota</taxon>
        <taxon>Gammaproteobacteria</taxon>
        <taxon>Enterobacterales</taxon>
        <taxon>Enterobacteriaceae</taxon>
        <taxon>Shigella</taxon>
    </lineage>
</organism>
<sequence>MSKRRVVVTGLGMLSPVGNTVESTWKALLAGQSGISLIDHFDTSAYATKFAGLVKDFNCEDIISRKEQRKMDAFIQYGIVAGVQAMQDSGLEITEENATRIGAAIGSGIGGLGLIEENHTSLMNGGPRKISPFFVPSTIVNMVAGHLTIMYGLRGPSISIATACTSGVHNIGHAARIIAYGDADVMVAGGAEKASTPLGVGGFGAARALSTRNDNPQAASRPWDKERDGFVLGDGAGMLVLEEYEHAKKRGAKIYAELVGFGMSSDAYHMTSPPENGAGAALAMANALRDAGIEASQIGYVNAHGTSTPAGDKAEAQAVKTIFGEAASRVLVSSTKSMTGHLLGAAGAVESIYSILALRDQAVPPTINLDNPDEGCDLDFVPHEARQVSGMEYTLCNSFGFGGTNGSLIFKKI</sequence>
<accession>P0AAI8</accession>
<accession>P39435</accession>
<proteinExistence type="inferred from homology"/>
<gene>
    <name type="primary">fabF</name>
    <name type="ordered locus">SF1099</name>
    <name type="ordered locus">S1179</name>
</gene>
<evidence type="ECO:0000250" key="1"/>
<evidence type="ECO:0000250" key="2">
    <source>
        <dbReference type="UniProtKB" id="P0AAI5"/>
    </source>
</evidence>
<evidence type="ECO:0000255" key="3">
    <source>
        <dbReference type="PROSITE-ProRule" id="PRU01348"/>
    </source>
</evidence>
<evidence type="ECO:0000305" key="4"/>
<name>FABF_SHIFL</name>